<keyword id="KW-0025">Alternative splicing</keyword>
<keyword id="KW-0963">Cytoplasm</keyword>
<keyword id="KW-0488">Methylation</keyword>
<keyword id="KW-0539">Nucleus</keyword>
<keyword id="KW-0597">Phosphoprotein</keyword>
<keyword id="KW-1185">Reference proteome</keyword>
<keyword id="KW-0677">Repeat</keyword>
<keyword id="KW-0833">Ubl conjugation pathway</keyword>
<keyword id="KW-0853">WD repeat</keyword>
<sequence length="591" mass="66031">MSNKRPNTTDGRTDLANGSLSSSPEEMSGAEEGRETSSGIEVEASDLSLSLTGDDGGPNRTSTESRGTDTESSGEEKDSDSMEDTGHYSINDESRGHGHSDEEDEEQPRHRGQRKRASRDQDSSDDERALEDWVSSETTALPRPRWQALPALRERELGSSARFVYEACGARVFVQRFRLQHGLEGHTGCVNTLHFNQRGTWLASGSDDLKVVVWDWVRRQPVLDFESGHKSNVFQAKFLPNSGDSTLAMCARDGQVRVAELSATQCCKNTKRVAQHKGASHKLALEPDSPCTFLSAGEDAVVFTIDLRQDRPASKLVVTKEKEKKVGLYTIYVNPANTHQFAVGGRDQYVRIYDQRKIDENENNGVLKKFCPHHLVNSESKANITCLVYSHDGTELLASYNDEDIYLFNSSHSDGAQYIKRYKGHRNNATVKGVNFYGPKSEFVVSGSDCGHIFLWEKSSCQIIQFMEGDKGGVVNCLEPHPHLPVLATSGLDHDVKIWAPTAEASTELTGLKEVIKKNKRERDEDSLHHTDLFDSHMLWFLMHHLRQRRHHRRWREPGVGATDADSDESPSSSDTSDEEEGPDRVQCMPS</sequence>
<organism>
    <name type="scientific">Mus musculus</name>
    <name type="common">Mouse</name>
    <dbReference type="NCBI Taxonomy" id="10090"/>
    <lineage>
        <taxon>Eukaryota</taxon>
        <taxon>Metazoa</taxon>
        <taxon>Chordata</taxon>
        <taxon>Craniata</taxon>
        <taxon>Vertebrata</taxon>
        <taxon>Euteleostomi</taxon>
        <taxon>Mammalia</taxon>
        <taxon>Eutheria</taxon>
        <taxon>Euarchontoglires</taxon>
        <taxon>Glires</taxon>
        <taxon>Rodentia</taxon>
        <taxon>Myomorpha</taxon>
        <taxon>Muroidea</taxon>
        <taxon>Muridae</taxon>
        <taxon>Murinae</taxon>
        <taxon>Mus</taxon>
        <taxon>Mus</taxon>
    </lineage>
</organism>
<feature type="chain" id="PRO_0000296958" description="DDB1- and CUL4-associated factor 8">
    <location>
        <begin position="1"/>
        <end position="591"/>
    </location>
</feature>
<feature type="repeat" description="WD 1">
    <location>
        <begin position="185"/>
        <end position="224"/>
    </location>
</feature>
<feature type="repeat" description="WD 2">
    <location>
        <begin position="228"/>
        <end position="269"/>
    </location>
</feature>
<feature type="repeat" description="WD 3">
    <location>
        <begin position="275"/>
        <end position="315"/>
    </location>
</feature>
<feature type="repeat" description="WD 4">
    <location>
        <begin position="323"/>
        <end position="363"/>
    </location>
</feature>
<feature type="repeat" description="WD 5">
    <location>
        <begin position="379"/>
        <end position="418"/>
    </location>
</feature>
<feature type="repeat" description="WD 6">
    <location>
        <begin position="426"/>
        <end position="466"/>
    </location>
</feature>
<feature type="repeat" description="WD 7">
    <location>
        <begin position="470"/>
        <end position="509"/>
    </location>
</feature>
<feature type="region of interest" description="Disordered" evidence="3">
    <location>
        <begin position="1"/>
        <end position="140"/>
    </location>
</feature>
<feature type="region of interest" description="Disordered" evidence="3">
    <location>
        <begin position="552"/>
        <end position="591"/>
    </location>
</feature>
<feature type="short sequence motif" description="Nuclear export signal" evidence="2">
    <location>
        <begin position="40"/>
        <end position="51"/>
    </location>
</feature>
<feature type="compositionally biased region" description="Polar residues" evidence="3">
    <location>
        <begin position="1"/>
        <end position="25"/>
    </location>
</feature>
<feature type="compositionally biased region" description="Basic and acidic residues" evidence="3">
    <location>
        <begin position="66"/>
        <end position="100"/>
    </location>
</feature>
<feature type="compositionally biased region" description="Basic and acidic residues" evidence="3">
    <location>
        <begin position="118"/>
        <end position="131"/>
    </location>
</feature>
<feature type="modified residue" description="Phosphoserine" evidence="8">
    <location>
        <position position="22"/>
    </location>
</feature>
<feature type="modified residue" description="Phosphoserine" evidence="8">
    <location>
        <position position="23"/>
    </location>
</feature>
<feature type="modified residue" description="Phosphoserine" evidence="7 8">
    <location>
        <position position="100"/>
    </location>
</feature>
<feature type="modified residue" description="Phosphoserine" evidence="8">
    <location>
        <position position="123"/>
    </location>
</feature>
<feature type="modified residue" description="Phosphoserine" evidence="8">
    <location>
        <position position="124"/>
    </location>
</feature>
<feature type="modified residue" description="Omega-N-methylarginine; by PRMT1" evidence="2">
    <location>
        <position position="198"/>
    </location>
</feature>
<feature type="splice variant" id="VSP_027266" description="In isoform 2." evidence="5">
    <original>VNSESKANITCLVYSHDGTELLASYNDEDIYLFNSS</original>
    <variation>SSWPVTMMKTFTFSTLLTVMGPSILRDTKAIEIMLQ</variation>
    <location>
        <begin position="376"/>
        <end position="411"/>
    </location>
</feature>
<feature type="splice variant" id="VSP_027267" description="In isoform 2." evidence="5">
    <location>
        <begin position="412"/>
        <end position="591"/>
    </location>
</feature>
<dbReference type="EMBL" id="AK098114">
    <property type="protein sequence ID" value="BAC05237.1"/>
    <property type="molecule type" value="mRNA"/>
</dbReference>
<dbReference type="EMBL" id="AK146825">
    <property type="protein sequence ID" value="BAE27462.1"/>
    <property type="molecule type" value="mRNA"/>
</dbReference>
<dbReference type="EMBL" id="BC023704">
    <property type="protein sequence ID" value="AAH23704.1"/>
    <property type="status" value="ALT_INIT"/>
    <property type="molecule type" value="mRNA"/>
</dbReference>
<dbReference type="EMBL" id="BC023804">
    <property type="protein sequence ID" value="AAH23804.1"/>
    <property type="molecule type" value="mRNA"/>
</dbReference>
<dbReference type="CCDS" id="CCDS15509.1">
    <molecule id="Q8N7N5-1"/>
</dbReference>
<dbReference type="RefSeq" id="NP_001344133.1">
    <molecule id="Q8N7N5-1"/>
    <property type="nucleotide sequence ID" value="NM_001357204.2"/>
</dbReference>
<dbReference type="RefSeq" id="NP_001408139.1">
    <molecule id="Q8N7N5-1"/>
    <property type="nucleotide sequence ID" value="NM_001421210.1"/>
</dbReference>
<dbReference type="RefSeq" id="NP_001408140.1">
    <molecule id="Q8N7N5-1"/>
    <property type="nucleotide sequence ID" value="NM_001421211.1"/>
</dbReference>
<dbReference type="RefSeq" id="NP_705783.1">
    <molecule id="Q8N7N5-1"/>
    <property type="nucleotide sequence ID" value="NM_153555.3"/>
</dbReference>
<dbReference type="RefSeq" id="XP_006497128.1">
    <property type="nucleotide sequence ID" value="XM_006497065.3"/>
</dbReference>
<dbReference type="RefSeq" id="XP_011237191.1">
    <property type="nucleotide sequence ID" value="XM_011238889.2"/>
</dbReference>
<dbReference type="SMR" id="Q8N7N5"/>
<dbReference type="BioGRID" id="221007">
    <property type="interactions" value="4"/>
</dbReference>
<dbReference type="FunCoup" id="Q8N7N5">
    <property type="interactions" value="4462"/>
</dbReference>
<dbReference type="IntAct" id="Q8N7N5">
    <property type="interactions" value="6"/>
</dbReference>
<dbReference type="MINT" id="Q8N7N5"/>
<dbReference type="STRING" id="10090.ENSMUSP00000073778"/>
<dbReference type="iPTMnet" id="Q8N7N5"/>
<dbReference type="PhosphoSitePlus" id="Q8N7N5"/>
<dbReference type="SwissPalm" id="Q8N7N5"/>
<dbReference type="jPOST" id="Q8N7N5"/>
<dbReference type="PaxDb" id="10090-ENSMUSP00000073778"/>
<dbReference type="PeptideAtlas" id="Q8N7N5"/>
<dbReference type="ProteomicsDB" id="277961">
    <molecule id="Q8N7N5-1"/>
</dbReference>
<dbReference type="ProteomicsDB" id="277962">
    <molecule id="Q8N7N5-2"/>
</dbReference>
<dbReference type="Pumba" id="Q8N7N5"/>
<dbReference type="Antibodypedia" id="20487">
    <property type="antibodies" value="84 antibodies from 16 providers"/>
</dbReference>
<dbReference type="Ensembl" id="ENSMUST00000074144.11">
    <molecule id="Q8N7N5-1"/>
    <property type="protein sequence ID" value="ENSMUSP00000073778.6"/>
    <property type="gene ID" value="ENSMUSG00000026554.16"/>
</dbReference>
<dbReference type="Ensembl" id="ENSMUST00000191689.6">
    <molecule id="Q8N7N5-1"/>
    <property type="protein sequence ID" value="ENSMUSP00000141731.2"/>
    <property type="gene ID" value="ENSMUSG00000026554.16"/>
</dbReference>
<dbReference type="Ensembl" id="ENSMUST00000192704.6">
    <molecule id="Q8N7N5-1"/>
    <property type="protein sequence ID" value="ENSMUSP00000141732.2"/>
    <property type="gene ID" value="ENSMUSG00000026554.16"/>
</dbReference>
<dbReference type="Ensembl" id="ENSMUST00000193638.6">
    <molecule id="Q8N7N5-2"/>
    <property type="protein sequence ID" value="ENSMUSP00000141836.2"/>
    <property type="gene ID" value="ENSMUSG00000026554.16"/>
</dbReference>
<dbReference type="GeneID" id="98193"/>
<dbReference type="KEGG" id="mmu:98193"/>
<dbReference type="UCSC" id="uc007dpr.2">
    <molecule id="Q8N7N5-2"/>
    <property type="organism name" value="mouse"/>
</dbReference>
<dbReference type="UCSC" id="uc007dps.2">
    <molecule id="Q8N7N5-1"/>
    <property type="organism name" value="mouse"/>
</dbReference>
<dbReference type="AGR" id="MGI:91860"/>
<dbReference type="CTD" id="50717"/>
<dbReference type="MGI" id="MGI:91860">
    <property type="gene designation" value="Dcaf8"/>
</dbReference>
<dbReference type="VEuPathDB" id="HostDB:ENSMUSG00000026554"/>
<dbReference type="eggNOG" id="KOG1334">
    <property type="taxonomic scope" value="Eukaryota"/>
</dbReference>
<dbReference type="GeneTree" id="ENSGT00950000182900"/>
<dbReference type="HOGENOM" id="CLU_012381_4_1_1"/>
<dbReference type="InParanoid" id="Q8N7N5"/>
<dbReference type="OMA" id="MRMMNGD"/>
<dbReference type="OrthoDB" id="4869960at2759"/>
<dbReference type="PhylomeDB" id="Q8N7N5"/>
<dbReference type="TreeFam" id="TF326071"/>
<dbReference type="Reactome" id="R-MMU-8951664">
    <property type="pathway name" value="Neddylation"/>
</dbReference>
<dbReference type="UniPathway" id="UPA00143"/>
<dbReference type="BioGRID-ORCS" id="98193">
    <property type="hits" value="0 hits in 77 CRISPR screens"/>
</dbReference>
<dbReference type="ChiTaRS" id="Dcaf8">
    <property type="organism name" value="mouse"/>
</dbReference>
<dbReference type="PRO" id="PR:Q8N7N5"/>
<dbReference type="Proteomes" id="UP000000589">
    <property type="component" value="Chromosome 1"/>
</dbReference>
<dbReference type="RNAct" id="Q8N7N5">
    <property type="molecule type" value="protein"/>
</dbReference>
<dbReference type="Bgee" id="ENSMUSG00000026554">
    <property type="expression patterns" value="Expressed in retinal neural layer and 262 other cell types or tissues"/>
</dbReference>
<dbReference type="ExpressionAtlas" id="Q8N7N5">
    <property type="expression patterns" value="baseline and differential"/>
</dbReference>
<dbReference type="GO" id="GO:0080008">
    <property type="term" value="C:Cul4-RING E3 ubiquitin ligase complex"/>
    <property type="evidence" value="ECO:0000314"/>
    <property type="project" value="MGI"/>
</dbReference>
<dbReference type="GO" id="GO:0005737">
    <property type="term" value="C:cytoplasm"/>
    <property type="evidence" value="ECO:0000250"/>
    <property type="project" value="UniProtKB"/>
</dbReference>
<dbReference type="GO" id="GO:0005829">
    <property type="term" value="C:cytosol"/>
    <property type="evidence" value="ECO:0007669"/>
    <property type="project" value="Ensembl"/>
</dbReference>
<dbReference type="GO" id="GO:0005739">
    <property type="term" value="C:mitochondrion"/>
    <property type="evidence" value="ECO:0007669"/>
    <property type="project" value="Ensembl"/>
</dbReference>
<dbReference type="GO" id="GO:0005654">
    <property type="term" value="C:nucleoplasm"/>
    <property type="evidence" value="ECO:0007669"/>
    <property type="project" value="Ensembl"/>
</dbReference>
<dbReference type="GO" id="GO:0005634">
    <property type="term" value="C:nucleus"/>
    <property type="evidence" value="ECO:0000250"/>
    <property type="project" value="UniProtKB"/>
</dbReference>
<dbReference type="GO" id="GO:0014904">
    <property type="term" value="P:myotube cell development"/>
    <property type="evidence" value="ECO:0000315"/>
    <property type="project" value="MGI"/>
</dbReference>
<dbReference type="GO" id="GO:0016567">
    <property type="term" value="P:protein ubiquitination"/>
    <property type="evidence" value="ECO:0007669"/>
    <property type="project" value="UniProtKB-UniPathway"/>
</dbReference>
<dbReference type="FunFam" id="2.130.10.10:FF:000144">
    <property type="entry name" value="DDB1- and CUL4-associated factor 8"/>
    <property type="match status" value="1"/>
</dbReference>
<dbReference type="Gene3D" id="2.130.10.10">
    <property type="entry name" value="YVTN repeat-like/Quinoprotein amine dehydrogenase"/>
    <property type="match status" value="1"/>
</dbReference>
<dbReference type="InterPro" id="IPR045151">
    <property type="entry name" value="DCAF8"/>
</dbReference>
<dbReference type="InterPro" id="IPR015943">
    <property type="entry name" value="WD40/YVTN_repeat-like_dom_sf"/>
</dbReference>
<dbReference type="InterPro" id="IPR036322">
    <property type="entry name" value="WD40_repeat_dom_sf"/>
</dbReference>
<dbReference type="InterPro" id="IPR001680">
    <property type="entry name" value="WD40_rpt"/>
</dbReference>
<dbReference type="PANTHER" id="PTHR15574:SF57">
    <property type="entry name" value="DDB1- AND CUL4-ASSOCIATED FACTOR 8"/>
    <property type="match status" value="1"/>
</dbReference>
<dbReference type="PANTHER" id="PTHR15574">
    <property type="entry name" value="WD REPEAT DOMAIN-CONTAINING FAMILY"/>
    <property type="match status" value="1"/>
</dbReference>
<dbReference type="Pfam" id="PF00400">
    <property type="entry name" value="WD40"/>
    <property type="match status" value="3"/>
</dbReference>
<dbReference type="SMART" id="SM00320">
    <property type="entry name" value="WD40"/>
    <property type="match status" value="7"/>
</dbReference>
<dbReference type="SUPFAM" id="SSF50978">
    <property type="entry name" value="WD40 repeat-like"/>
    <property type="match status" value="1"/>
</dbReference>
<dbReference type="PROSITE" id="PS50082">
    <property type="entry name" value="WD_REPEATS_2"/>
    <property type="match status" value="1"/>
</dbReference>
<dbReference type="PROSITE" id="PS50294">
    <property type="entry name" value="WD_REPEATS_REGION"/>
    <property type="match status" value="1"/>
</dbReference>
<proteinExistence type="evidence at protein level"/>
<comment type="function">
    <text evidence="1">May function as a substrate receptor for CUL4-DDB1 E3 ubiquitin-protein ligase complex.</text>
</comment>
<comment type="pathway">
    <text>Protein modification; protein ubiquitination.</text>
</comment>
<comment type="subunit">
    <text evidence="1 2">Interacts with DDB1, CUL4A and CUL4B. Interacts with KPNA1, KPNB1 and XPO1.</text>
</comment>
<comment type="subcellular location">
    <subcellularLocation>
        <location evidence="2">Nucleus</location>
    </subcellularLocation>
    <subcellularLocation>
        <location evidence="2">Cytoplasm</location>
    </subcellularLocation>
    <text evidence="2">It shuttles between the nucleus and the cytoplasm. Nuclear import is mediated by KPNA1 and KPNB1 under the regulation of nuclear GTPase RAN. Nuclear export to the cytoplasm is XPO1 dependent.</text>
</comment>
<comment type="alternative products">
    <event type="alternative splicing"/>
    <isoform>
        <id>Q8N7N5-1</id>
        <name>1</name>
        <sequence type="displayed"/>
    </isoform>
    <isoform>
        <id>Q8N7N5-2</id>
        <name>2</name>
        <sequence type="described" ref="VSP_027266 VSP_027267"/>
    </isoform>
</comment>
<comment type="tissue specificity">
    <text evidence="4">Expressed in the brain.</text>
</comment>
<comment type="developmental stage">
    <text evidence="4">Expressed in the brain at 8.5 dpc, 9.5 dpc and 10.5 dpc.</text>
</comment>
<comment type="miscellaneous">
    <text>The homozygous loop-tail (Lp) mouse has a severe neural tube closure defect, analogous to the craniorachischisis phenotype seen in humans. This gene has been mapped to The Lp critical region.</text>
</comment>
<comment type="similarity">
    <text evidence="6">Belongs to the WD repeat DCAF8 family.</text>
</comment>
<comment type="sequence caution" evidence="6">
    <conflict type="erroneous initiation">
        <sequence resource="EMBL-CDS" id="AAH23704"/>
    </conflict>
</comment>
<name>DCAF8_MOUSE</name>
<evidence type="ECO:0000250" key="1"/>
<evidence type="ECO:0000250" key="2">
    <source>
        <dbReference type="UniProtKB" id="Q5TAQ9"/>
    </source>
</evidence>
<evidence type="ECO:0000256" key="3">
    <source>
        <dbReference type="SAM" id="MobiDB-lite"/>
    </source>
</evidence>
<evidence type="ECO:0000269" key="4">
    <source>
    </source>
</evidence>
<evidence type="ECO:0000303" key="5">
    <source>
    </source>
</evidence>
<evidence type="ECO:0000305" key="6"/>
<evidence type="ECO:0007744" key="7">
    <source>
    </source>
</evidence>
<evidence type="ECO:0007744" key="8">
    <source>
    </source>
</evidence>
<gene>
    <name type="primary">Dcaf8</name>
    <name type="synonym">D1Ucla4</name>
    <name type="synonym">H326</name>
    <name type="synonym">Wdr42a</name>
</gene>
<accession>Q8N7N5</accession>
<accession>Q8CII7</accession>
<accession>Q8CIK6</accession>
<protein>
    <recommendedName>
        <fullName>DDB1- and CUL4-associated factor 8</fullName>
    </recommendedName>
    <alternativeName>
        <fullName>WD repeat-containing protein 42A</fullName>
    </alternativeName>
</protein>
<reference key="1">
    <citation type="submission" date="2002-07" db="EMBL/GenBank/DDBJ databases">
        <title>NEDO cDNA sequencing project.</title>
        <authorList>
            <person name="Oshima A."/>
            <person name="Takahashi-Fujii A."/>
            <person name="Tanase T."/>
            <person name="Imose N."/>
            <person name="Takeuchi K."/>
            <person name="Arita M."/>
            <person name="Musashino K."/>
            <person name="Yuuki H."/>
            <person name="Hara H."/>
            <person name="Sugiyama T."/>
            <person name="Irie R."/>
            <person name="Otsuki T."/>
            <person name="Sato H."/>
            <person name="Ota T."/>
            <person name="Wakamatsu A."/>
            <person name="Ishii S."/>
            <person name="Yamamoto J."/>
            <person name="Isono Y."/>
            <person name="Kawai-Hio Y."/>
            <person name="Saito K."/>
            <person name="Nishikawa T."/>
            <person name="Kimura K."/>
            <person name="Yamashita H."/>
            <person name="Matsuo K."/>
            <person name="Nakamura Y."/>
            <person name="Sekine M."/>
            <person name="Kikuchi H."/>
            <person name="Kanda K."/>
            <person name="Wagatsuma M."/>
            <person name="Murakawa K."/>
            <person name="Kanehori K."/>
            <person name="Sugiyama A."/>
            <person name="Kawakami B."/>
            <person name="Suzuki Y."/>
            <person name="Sugano S."/>
            <person name="Nagahari K."/>
            <person name="Masuho Y."/>
            <person name="Nagai K."/>
            <person name="Isogai T."/>
        </authorList>
    </citation>
    <scope>NUCLEOTIDE SEQUENCE [LARGE SCALE MRNA] (ISOFORM 1)</scope>
</reference>
<reference key="2">
    <citation type="journal article" date="2005" name="Science">
        <title>The transcriptional landscape of the mammalian genome.</title>
        <authorList>
            <person name="Carninci P."/>
            <person name="Kasukawa T."/>
            <person name="Katayama S."/>
            <person name="Gough J."/>
            <person name="Frith M.C."/>
            <person name="Maeda N."/>
            <person name="Oyama R."/>
            <person name="Ravasi T."/>
            <person name="Lenhard B."/>
            <person name="Wells C."/>
            <person name="Kodzius R."/>
            <person name="Shimokawa K."/>
            <person name="Bajic V.B."/>
            <person name="Brenner S.E."/>
            <person name="Batalov S."/>
            <person name="Forrest A.R."/>
            <person name="Zavolan M."/>
            <person name="Davis M.J."/>
            <person name="Wilming L.G."/>
            <person name="Aidinis V."/>
            <person name="Allen J.E."/>
            <person name="Ambesi-Impiombato A."/>
            <person name="Apweiler R."/>
            <person name="Aturaliya R.N."/>
            <person name="Bailey T.L."/>
            <person name="Bansal M."/>
            <person name="Baxter L."/>
            <person name="Beisel K.W."/>
            <person name="Bersano T."/>
            <person name="Bono H."/>
            <person name="Chalk A.M."/>
            <person name="Chiu K.P."/>
            <person name="Choudhary V."/>
            <person name="Christoffels A."/>
            <person name="Clutterbuck D.R."/>
            <person name="Crowe M.L."/>
            <person name="Dalla E."/>
            <person name="Dalrymple B.P."/>
            <person name="de Bono B."/>
            <person name="Della Gatta G."/>
            <person name="di Bernardo D."/>
            <person name="Down T."/>
            <person name="Engstrom P."/>
            <person name="Fagiolini M."/>
            <person name="Faulkner G."/>
            <person name="Fletcher C.F."/>
            <person name="Fukushima T."/>
            <person name="Furuno M."/>
            <person name="Futaki S."/>
            <person name="Gariboldi M."/>
            <person name="Georgii-Hemming P."/>
            <person name="Gingeras T.R."/>
            <person name="Gojobori T."/>
            <person name="Green R.E."/>
            <person name="Gustincich S."/>
            <person name="Harbers M."/>
            <person name="Hayashi Y."/>
            <person name="Hensch T.K."/>
            <person name="Hirokawa N."/>
            <person name="Hill D."/>
            <person name="Huminiecki L."/>
            <person name="Iacono M."/>
            <person name="Ikeo K."/>
            <person name="Iwama A."/>
            <person name="Ishikawa T."/>
            <person name="Jakt M."/>
            <person name="Kanapin A."/>
            <person name="Katoh M."/>
            <person name="Kawasawa Y."/>
            <person name="Kelso J."/>
            <person name="Kitamura H."/>
            <person name="Kitano H."/>
            <person name="Kollias G."/>
            <person name="Krishnan S.P."/>
            <person name="Kruger A."/>
            <person name="Kummerfeld S.K."/>
            <person name="Kurochkin I.V."/>
            <person name="Lareau L.F."/>
            <person name="Lazarevic D."/>
            <person name="Lipovich L."/>
            <person name="Liu J."/>
            <person name="Liuni S."/>
            <person name="McWilliam S."/>
            <person name="Madan Babu M."/>
            <person name="Madera M."/>
            <person name="Marchionni L."/>
            <person name="Matsuda H."/>
            <person name="Matsuzawa S."/>
            <person name="Miki H."/>
            <person name="Mignone F."/>
            <person name="Miyake S."/>
            <person name="Morris K."/>
            <person name="Mottagui-Tabar S."/>
            <person name="Mulder N."/>
            <person name="Nakano N."/>
            <person name="Nakauchi H."/>
            <person name="Ng P."/>
            <person name="Nilsson R."/>
            <person name="Nishiguchi S."/>
            <person name="Nishikawa S."/>
            <person name="Nori F."/>
            <person name="Ohara O."/>
            <person name="Okazaki Y."/>
            <person name="Orlando V."/>
            <person name="Pang K.C."/>
            <person name="Pavan W.J."/>
            <person name="Pavesi G."/>
            <person name="Pesole G."/>
            <person name="Petrovsky N."/>
            <person name="Piazza S."/>
            <person name="Reed J."/>
            <person name="Reid J.F."/>
            <person name="Ring B.Z."/>
            <person name="Ringwald M."/>
            <person name="Rost B."/>
            <person name="Ruan Y."/>
            <person name="Salzberg S.L."/>
            <person name="Sandelin A."/>
            <person name="Schneider C."/>
            <person name="Schoenbach C."/>
            <person name="Sekiguchi K."/>
            <person name="Semple C.A."/>
            <person name="Seno S."/>
            <person name="Sessa L."/>
            <person name="Sheng Y."/>
            <person name="Shibata Y."/>
            <person name="Shimada H."/>
            <person name="Shimada K."/>
            <person name="Silva D."/>
            <person name="Sinclair B."/>
            <person name="Sperling S."/>
            <person name="Stupka E."/>
            <person name="Sugiura K."/>
            <person name="Sultana R."/>
            <person name="Takenaka Y."/>
            <person name="Taki K."/>
            <person name="Tammoja K."/>
            <person name="Tan S.L."/>
            <person name="Tang S."/>
            <person name="Taylor M.S."/>
            <person name="Tegner J."/>
            <person name="Teichmann S.A."/>
            <person name="Ueda H.R."/>
            <person name="van Nimwegen E."/>
            <person name="Verardo R."/>
            <person name="Wei C.L."/>
            <person name="Yagi K."/>
            <person name="Yamanishi H."/>
            <person name="Zabarovsky E."/>
            <person name="Zhu S."/>
            <person name="Zimmer A."/>
            <person name="Hide W."/>
            <person name="Bult C."/>
            <person name="Grimmond S.M."/>
            <person name="Teasdale R.D."/>
            <person name="Liu E.T."/>
            <person name="Brusic V."/>
            <person name="Quackenbush J."/>
            <person name="Wahlestedt C."/>
            <person name="Mattick J.S."/>
            <person name="Hume D.A."/>
            <person name="Kai C."/>
            <person name="Sasaki D."/>
            <person name="Tomaru Y."/>
            <person name="Fukuda S."/>
            <person name="Kanamori-Katayama M."/>
            <person name="Suzuki M."/>
            <person name="Aoki J."/>
            <person name="Arakawa T."/>
            <person name="Iida J."/>
            <person name="Imamura K."/>
            <person name="Itoh M."/>
            <person name="Kato T."/>
            <person name="Kawaji H."/>
            <person name="Kawagashira N."/>
            <person name="Kawashima T."/>
            <person name="Kojima M."/>
            <person name="Kondo S."/>
            <person name="Konno H."/>
            <person name="Nakano K."/>
            <person name="Ninomiya N."/>
            <person name="Nishio T."/>
            <person name="Okada M."/>
            <person name="Plessy C."/>
            <person name="Shibata K."/>
            <person name="Shiraki T."/>
            <person name="Suzuki S."/>
            <person name="Tagami M."/>
            <person name="Waki K."/>
            <person name="Watahiki A."/>
            <person name="Okamura-Oho Y."/>
            <person name="Suzuki H."/>
            <person name="Kawai J."/>
            <person name="Hayashizaki Y."/>
        </authorList>
    </citation>
    <scope>NUCLEOTIDE SEQUENCE [LARGE SCALE MRNA] (ISOFORM 1)</scope>
    <source>
        <strain>C57BL/6J</strain>
        <tissue>Liver</tissue>
    </source>
</reference>
<reference key="3">
    <citation type="journal article" date="2004" name="Genome Res.">
        <title>The status, quality, and expansion of the NIH full-length cDNA project: the Mammalian Gene Collection (MGC).</title>
        <authorList>
            <consortium name="The MGC Project Team"/>
        </authorList>
    </citation>
    <scope>NUCLEOTIDE SEQUENCE [LARGE SCALE MRNA] (ISOFORMS 1 AND 2)</scope>
    <source>
        <strain>FVB/N</strain>
        <tissue>Mammary tumor</tissue>
    </source>
</reference>
<reference key="4">
    <citation type="journal article" date="2001" name="Genomics">
        <title>Comparative physical and transcript maps of approximately 1 Mb around loop-tail, a gene for severe neural tube defects on distal mouse chromosome 1 and human chromosome 1q22-q23.</title>
        <authorList>
            <person name="Doudney K."/>
            <person name="Murdoch J.N."/>
            <person name="Paternotte C."/>
            <person name="Bentley L."/>
            <person name="Gregory S."/>
            <person name="Copp A.J."/>
            <person name="Stanier P."/>
        </authorList>
    </citation>
    <scope>TISSUE SPECIFICITY</scope>
    <scope>DEVELOPMENTAL STAGE</scope>
</reference>
<reference key="5">
    <citation type="journal article" date="2007" name="Mol. Cell. Proteomics">
        <title>Mitochondrial phosphoproteome revealed by an improved IMAC method and MS/MS/MS.</title>
        <authorList>
            <person name="Lee J."/>
            <person name="Xu Y."/>
            <person name="Chen Y."/>
            <person name="Sprung R."/>
            <person name="Kim S.C."/>
            <person name="Xie S."/>
            <person name="Zhao Y."/>
        </authorList>
    </citation>
    <scope>PHOSPHORYLATION [LARGE SCALE ANALYSIS] AT SER-100</scope>
    <scope>IDENTIFICATION BY MASS SPECTROMETRY [LARGE SCALE ANALYSIS]</scope>
    <source>
        <tissue>Liver</tissue>
    </source>
</reference>
<reference key="6">
    <citation type="journal article" date="2009" name="Mol. Cell. Proteomics">
        <title>Large scale localization of protein phosphorylation by use of electron capture dissociation mass spectrometry.</title>
        <authorList>
            <person name="Sweet S.M."/>
            <person name="Bailey C.M."/>
            <person name="Cunningham D.L."/>
            <person name="Heath J.K."/>
            <person name="Cooper H.J."/>
        </authorList>
    </citation>
    <scope>IDENTIFICATION BY MASS SPECTROMETRY [LARGE SCALE ANALYSIS]</scope>
    <source>
        <tissue>Embryonic fibroblast</tissue>
    </source>
</reference>
<reference key="7">
    <citation type="journal article" date="2010" name="Cell">
        <title>A tissue-specific atlas of mouse protein phosphorylation and expression.</title>
        <authorList>
            <person name="Huttlin E.L."/>
            <person name="Jedrychowski M.P."/>
            <person name="Elias J.E."/>
            <person name="Goswami T."/>
            <person name="Rad R."/>
            <person name="Beausoleil S.A."/>
            <person name="Villen J."/>
            <person name="Haas W."/>
            <person name="Sowa M.E."/>
            <person name="Gygi S.P."/>
        </authorList>
    </citation>
    <scope>PHOSPHORYLATION [LARGE SCALE ANALYSIS] AT SER-22; SER-23; SER-100; SER-123 AND SER-124</scope>
    <scope>IDENTIFICATION BY MASS SPECTROMETRY [LARGE SCALE ANALYSIS]</scope>
    <source>
        <tissue>Brain</tissue>
        <tissue>Brown adipose tissue</tissue>
        <tissue>Heart</tissue>
        <tissue>Kidney</tissue>
        <tissue>Liver</tissue>
        <tissue>Lung</tissue>
        <tissue>Pancreas</tissue>
        <tissue>Spleen</tissue>
        <tissue>Testis</tissue>
    </source>
</reference>